<comment type="catalytic activity">
    <reaction>
        <text>tRNA(Cys) + L-cysteine + ATP = L-cysteinyl-tRNA(Cys) + AMP + diphosphate</text>
        <dbReference type="Rhea" id="RHEA:17773"/>
        <dbReference type="Rhea" id="RHEA-COMP:9661"/>
        <dbReference type="Rhea" id="RHEA-COMP:9679"/>
        <dbReference type="ChEBI" id="CHEBI:30616"/>
        <dbReference type="ChEBI" id="CHEBI:33019"/>
        <dbReference type="ChEBI" id="CHEBI:35235"/>
        <dbReference type="ChEBI" id="CHEBI:78442"/>
        <dbReference type="ChEBI" id="CHEBI:78517"/>
        <dbReference type="ChEBI" id="CHEBI:456215"/>
        <dbReference type="EC" id="6.1.1.16"/>
    </reaction>
</comment>
<comment type="cofactor">
    <cofactor evidence="1">
        <name>Zn(2+)</name>
        <dbReference type="ChEBI" id="CHEBI:29105"/>
    </cofactor>
    <text evidence="1">Binds 1 zinc ion per subunit.</text>
</comment>
<comment type="subunit">
    <text evidence="1">Monomer.</text>
</comment>
<comment type="subcellular location">
    <subcellularLocation>
        <location evidence="1">Cytoplasm</location>
    </subcellularLocation>
</comment>
<comment type="similarity">
    <text evidence="2">Belongs to the class-I aminoacyl-tRNA synthetase family.</text>
</comment>
<comment type="sequence caution" evidence="2">
    <conflict type="erroneous initiation">
        <sequence resource="EMBL-CDS" id="AAC68377"/>
    </conflict>
</comment>
<sequence length="477" mass="54875">MDLFLYNTLSREKERFLPVNDPVKLYTCGPTVYDYAHIGNFRTYIFEDLLKRVLLFLGYSVYHVMNITDVDDKTLAGARKKGCSLEKYCQPYIHAFFADLETLHILKADAYPHATHYIPQMIEAIQQLINQGVAYIGQDQSVYFSISQFPNYGALSHLNLEELRNSARIDADEYDKDNLCDFVLWKAYDPDRDGEIFWESPFGKGRPGWHLECSIMSISLLGQSLDIHAGGVDNIFPHHENEIAQSESLSHKPFVRYWLHSHHLLVDRKKMSKSLGNFFTLRDLLDQGFSGEEVRYLLLQGHYRTQLNFTQEGLHASRQSLKRLRDFICRLEDPSYPDDIIHPEVATACQSFLETFITSLTNDLNISSSLAALFDFIRKINSSIDQHTGIQTETDSSVFSKQDAQHILALLRKIDQVLGVLPFSQPDIPEEVLLLVEQREAARKVKNWQEADRLRDEILSRSFAIEDGKTGMKVKKL</sequence>
<evidence type="ECO:0000250" key="1"/>
<evidence type="ECO:0000305" key="2"/>
<protein>
    <recommendedName>
        <fullName>Cysteine--tRNA ligase</fullName>
        <ecNumber>6.1.1.16</ecNumber>
    </recommendedName>
    <alternativeName>
        <fullName>Cysteinyl-tRNA synthetase</fullName>
        <shortName>CysRS</shortName>
    </alternativeName>
</protein>
<reference key="1">
    <citation type="journal article" date="1998" name="Science">
        <title>Genome sequence of an obligate intracellular pathogen of humans: Chlamydia trachomatis.</title>
        <authorList>
            <person name="Stephens R.S."/>
            <person name="Kalman S."/>
            <person name="Lammel C.J."/>
            <person name="Fan J."/>
            <person name="Marathe R."/>
            <person name="Aravind L."/>
            <person name="Mitchell W.P."/>
            <person name="Olinger L."/>
            <person name="Tatusov R.L."/>
            <person name="Zhao Q."/>
            <person name="Koonin E.V."/>
            <person name="Davis R.W."/>
        </authorList>
    </citation>
    <scope>NUCLEOTIDE SEQUENCE [LARGE SCALE GENOMIC DNA]</scope>
    <source>
        <strain>ATCC VR-885 / DSM 19411 / UW-3/Cx</strain>
    </source>
</reference>
<feature type="chain" id="PRO_0000159379" description="Cysteine--tRNA ligase">
    <location>
        <begin position="1"/>
        <end position="477"/>
    </location>
</feature>
<feature type="short sequence motif" description="'HIGH' region">
    <location>
        <begin position="30"/>
        <end position="40"/>
    </location>
</feature>
<feature type="short sequence motif" description="'KMSKS' region">
    <location>
        <begin position="270"/>
        <end position="274"/>
    </location>
</feature>
<feature type="binding site" evidence="1">
    <location>
        <position position="28"/>
    </location>
    <ligand>
        <name>Zn(2+)</name>
        <dbReference type="ChEBI" id="CHEBI:29105"/>
    </ligand>
</feature>
<feature type="binding site" evidence="1">
    <location>
        <position position="213"/>
    </location>
    <ligand>
        <name>Zn(2+)</name>
        <dbReference type="ChEBI" id="CHEBI:29105"/>
    </ligand>
</feature>
<feature type="binding site" evidence="1">
    <location>
        <position position="238"/>
    </location>
    <ligand>
        <name>Zn(2+)</name>
        <dbReference type="ChEBI" id="CHEBI:29105"/>
    </ligand>
</feature>
<feature type="binding site" evidence="1">
    <location>
        <position position="242"/>
    </location>
    <ligand>
        <name>Zn(2+)</name>
        <dbReference type="ChEBI" id="CHEBI:29105"/>
    </ligand>
</feature>
<feature type="binding site" evidence="1">
    <location>
        <position position="273"/>
    </location>
    <ligand>
        <name>ATP</name>
        <dbReference type="ChEBI" id="CHEBI:30616"/>
    </ligand>
</feature>
<accession>O84787</accession>
<gene>
    <name type="primary">cysS</name>
    <name type="ordered locus">CT_782</name>
</gene>
<proteinExistence type="inferred from homology"/>
<dbReference type="EC" id="6.1.1.16"/>
<dbReference type="EMBL" id="AE001273">
    <property type="protein sequence ID" value="AAC68377.1"/>
    <property type="status" value="ALT_INIT"/>
    <property type="molecule type" value="Genomic_DNA"/>
</dbReference>
<dbReference type="PIR" id="F71472">
    <property type="entry name" value="F71472"/>
</dbReference>
<dbReference type="RefSeq" id="NP_220301.1">
    <property type="nucleotide sequence ID" value="NC_000117.1"/>
</dbReference>
<dbReference type="SMR" id="O84787"/>
<dbReference type="FunCoup" id="O84787">
    <property type="interactions" value="223"/>
</dbReference>
<dbReference type="STRING" id="272561.CT_782"/>
<dbReference type="EnsemblBacteria" id="AAC68377">
    <property type="protein sequence ID" value="AAC68377"/>
    <property type="gene ID" value="CT_782"/>
</dbReference>
<dbReference type="GeneID" id="884587"/>
<dbReference type="KEGG" id="ctr:CT_782"/>
<dbReference type="PATRIC" id="fig|272561.5.peg.859"/>
<dbReference type="HOGENOM" id="CLU_013528_0_1_0"/>
<dbReference type="InParanoid" id="O84787"/>
<dbReference type="OrthoDB" id="9815130at2"/>
<dbReference type="Proteomes" id="UP000000431">
    <property type="component" value="Chromosome"/>
</dbReference>
<dbReference type="GO" id="GO:0005737">
    <property type="term" value="C:cytoplasm"/>
    <property type="evidence" value="ECO:0000318"/>
    <property type="project" value="GO_Central"/>
</dbReference>
<dbReference type="GO" id="GO:0005829">
    <property type="term" value="C:cytosol"/>
    <property type="evidence" value="ECO:0000318"/>
    <property type="project" value="GO_Central"/>
</dbReference>
<dbReference type="GO" id="GO:0005524">
    <property type="term" value="F:ATP binding"/>
    <property type="evidence" value="ECO:0000318"/>
    <property type="project" value="GO_Central"/>
</dbReference>
<dbReference type="GO" id="GO:0004817">
    <property type="term" value="F:cysteine-tRNA ligase activity"/>
    <property type="evidence" value="ECO:0000318"/>
    <property type="project" value="GO_Central"/>
</dbReference>
<dbReference type="GO" id="GO:0008270">
    <property type="term" value="F:zinc ion binding"/>
    <property type="evidence" value="ECO:0007669"/>
    <property type="project" value="UniProtKB-UniRule"/>
</dbReference>
<dbReference type="GO" id="GO:0006423">
    <property type="term" value="P:cysteinyl-tRNA aminoacylation"/>
    <property type="evidence" value="ECO:0000318"/>
    <property type="project" value="GO_Central"/>
</dbReference>
<dbReference type="CDD" id="cd00672">
    <property type="entry name" value="CysRS_core"/>
    <property type="match status" value="1"/>
</dbReference>
<dbReference type="FunFam" id="1.20.120.1910:FF:000018">
    <property type="entry name" value="Cysteine--tRNA ligase"/>
    <property type="match status" value="1"/>
</dbReference>
<dbReference type="FunFam" id="3.40.50.620:FF:000130">
    <property type="entry name" value="Cysteine--tRNA ligase"/>
    <property type="match status" value="1"/>
</dbReference>
<dbReference type="Gene3D" id="1.20.120.1910">
    <property type="entry name" value="Cysteine-tRNA ligase, C-terminal anti-codon recognition domain"/>
    <property type="match status" value="1"/>
</dbReference>
<dbReference type="Gene3D" id="3.40.50.620">
    <property type="entry name" value="HUPs"/>
    <property type="match status" value="1"/>
</dbReference>
<dbReference type="HAMAP" id="MF_00041">
    <property type="entry name" value="Cys_tRNA_synth"/>
    <property type="match status" value="1"/>
</dbReference>
<dbReference type="InterPro" id="IPR015803">
    <property type="entry name" value="Cys-tRNA-ligase"/>
</dbReference>
<dbReference type="InterPro" id="IPR015273">
    <property type="entry name" value="Cys-tRNA-synt_Ia_DALR"/>
</dbReference>
<dbReference type="InterPro" id="IPR024909">
    <property type="entry name" value="Cys-tRNA/MSH_ligase"/>
</dbReference>
<dbReference type="InterPro" id="IPR056411">
    <property type="entry name" value="CysS_C"/>
</dbReference>
<dbReference type="InterPro" id="IPR014729">
    <property type="entry name" value="Rossmann-like_a/b/a_fold"/>
</dbReference>
<dbReference type="InterPro" id="IPR032678">
    <property type="entry name" value="tRNA-synt_1_cat_dom"/>
</dbReference>
<dbReference type="InterPro" id="IPR009080">
    <property type="entry name" value="tRNAsynth_Ia_anticodon-bd"/>
</dbReference>
<dbReference type="NCBIfam" id="TIGR00435">
    <property type="entry name" value="cysS"/>
    <property type="match status" value="1"/>
</dbReference>
<dbReference type="PANTHER" id="PTHR10890:SF3">
    <property type="entry name" value="CYSTEINE--TRNA LIGASE, CYTOPLASMIC"/>
    <property type="match status" value="1"/>
</dbReference>
<dbReference type="PANTHER" id="PTHR10890">
    <property type="entry name" value="CYSTEINYL-TRNA SYNTHETASE"/>
    <property type="match status" value="1"/>
</dbReference>
<dbReference type="Pfam" id="PF23493">
    <property type="entry name" value="CysS_C"/>
    <property type="match status" value="1"/>
</dbReference>
<dbReference type="Pfam" id="PF09190">
    <property type="entry name" value="DALR_2"/>
    <property type="match status" value="1"/>
</dbReference>
<dbReference type="Pfam" id="PF01406">
    <property type="entry name" value="tRNA-synt_1e"/>
    <property type="match status" value="1"/>
</dbReference>
<dbReference type="PRINTS" id="PR00983">
    <property type="entry name" value="TRNASYNTHCYS"/>
</dbReference>
<dbReference type="SMART" id="SM00840">
    <property type="entry name" value="DALR_2"/>
    <property type="match status" value="1"/>
</dbReference>
<dbReference type="SUPFAM" id="SSF47323">
    <property type="entry name" value="Anticodon-binding domain of a subclass of class I aminoacyl-tRNA synthetases"/>
    <property type="match status" value="1"/>
</dbReference>
<dbReference type="SUPFAM" id="SSF52374">
    <property type="entry name" value="Nucleotidylyl transferase"/>
    <property type="match status" value="1"/>
</dbReference>
<organism>
    <name type="scientific">Chlamydia trachomatis serovar D (strain ATCC VR-885 / DSM 19411 / UW-3/Cx)</name>
    <dbReference type="NCBI Taxonomy" id="272561"/>
    <lineage>
        <taxon>Bacteria</taxon>
        <taxon>Pseudomonadati</taxon>
        <taxon>Chlamydiota</taxon>
        <taxon>Chlamydiia</taxon>
        <taxon>Chlamydiales</taxon>
        <taxon>Chlamydiaceae</taxon>
        <taxon>Chlamydia/Chlamydophila group</taxon>
        <taxon>Chlamydia</taxon>
    </lineage>
</organism>
<name>SYC_CHLTR</name>
<keyword id="KW-0030">Aminoacyl-tRNA synthetase</keyword>
<keyword id="KW-0067">ATP-binding</keyword>
<keyword id="KW-0963">Cytoplasm</keyword>
<keyword id="KW-0436">Ligase</keyword>
<keyword id="KW-0479">Metal-binding</keyword>
<keyword id="KW-0547">Nucleotide-binding</keyword>
<keyword id="KW-0648">Protein biosynthesis</keyword>
<keyword id="KW-1185">Reference proteome</keyword>
<keyword id="KW-0862">Zinc</keyword>